<comment type="function">
    <text evidence="1">Hydrolyzes oligopeptides such as neurotensin, bradykinin and dynorphin A. Acts as a regulator of cannabinoid signaling pathway by mediating degradation of hemopressin, an antagonist peptide of the cannabinoid receptor CNR1.</text>
</comment>
<comment type="catalytic activity">
    <reaction evidence="1">
        <text>Preferential cleavage in neurotensin: 10-Pro-|-Tyr-11.</text>
        <dbReference type="EC" id="3.4.24.16"/>
    </reaction>
</comment>
<comment type="cofactor">
    <cofactor evidence="2">
        <name>Zn(2+)</name>
        <dbReference type="ChEBI" id="CHEBI:29105"/>
    </cofactor>
    <text evidence="2">Binds 1 zinc ion per subunit.</text>
</comment>
<comment type="subcellular location">
    <subcellularLocation>
        <location evidence="1">Mitochondrion intermembrane space</location>
    </subcellularLocation>
    <subcellularLocation>
        <location evidence="1">Cytoplasm</location>
        <location evidence="1">Cytosol</location>
    </subcellularLocation>
</comment>
<comment type="similarity">
    <text evidence="5">Belongs to the peptidase M3 family.</text>
</comment>
<feature type="transit peptide" description="Mitochondrion" evidence="1">
    <location>
        <begin position="1"/>
        <end position="37"/>
    </location>
</feature>
<feature type="chain" id="PRO_0000319047" description="Neurolysin, mitochondrial">
    <location>
        <begin position="38"/>
        <end position="704"/>
    </location>
</feature>
<feature type="active site" evidence="4">
    <location>
        <position position="498"/>
    </location>
</feature>
<feature type="binding site" evidence="4">
    <location>
        <position position="497"/>
    </location>
    <ligand>
        <name>Zn(2+)</name>
        <dbReference type="ChEBI" id="CHEBI:29105"/>
        <note>catalytic</note>
    </ligand>
</feature>
<feature type="binding site" evidence="4">
    <location>
        <position position="501"/>
    </location>
    <ligand>
        <name>Zn(2+)</name>
        <dbReference type="ChEBI" id="CHEBI:29105"/>
        <note>catalytic</note>
    </ligand>
</feature>
<feature type="binding site" evidence="4">
    <location>
        <position position="504"/>
    </location>
    <ligand>
        <name>Zn(2+)</name>
        <dbReference type="ChEBI" id="CHEBI:29105"/>
        <note>catalytic</note>
    </ligand>
</feature>
<feature type="modified residue" description="N6-acetyllysine" evidence="3">
    <location>
        <position position="664"/>
    </location>
</feature>
<evidence type="ECO:0000250" key="1">
    <source>
        <dbReference type="UniProtKB" id="P42676"/>
    </source>
</evidence>
<evidence type="ECO:0000250" key="2">
    <source>
        <dbReference type="UniProtKB" id="P52888"/>
    </source>
</evidence>
<evidence type="ECO:0000250" key="3">
    <source>
        <dbReference type="UniProtKB" id="Q9BYT8"/>
    </source>
</evidence>
<evidence type="ECO:0000255" key="4">
    <source>
        <dbReference type="PROSITE-ProRule" id="PRU10095"/>
    </source>
</evidence>
<evidence type="ECO:0000305" key="5"/>
<protein>
    <recommendedName>
        <fullName>Neurolysin, mitochondrial</fullName>
        <ecNumber evidence="1">3.4.24.16</ecNumber>
    </recommendedName>
    <alternativeName>
        <fullName>Microsomal endopeptidase</fullName>
        <shortName>MEP</shortName>
    </alternativeName>
    <alternativeName>
        <fullName>Mitochondrial oligopeptidase M</fullName>
    </alternativeName>
    <alternativeName>
        <fullName>Neurotensin endopeptidase</fullName>
    </alternativeName>
</protein>
<keyword id="KW-0007">Acetylation</keyword>
<keyword id="KW-0963">Cytoplasm</keyword>
<keyword id="KW-0378">Hydrolase</keyword>
<keyword id="KW-0479">Metal-binding</keyword>
<keyword id="KW-0482">Metalloprotease</keyword>
<keyword id="KW-0496">Mitochondrion</keyword>
<keyword id="KW-0645">Protease</keyword>
<keyword id="KW-1185">Reference proteome</keyword>
<keyword id="KW-0809">Transit peptide</keyword>
<keyword id="KW-0862">Zinc</keyword>
<dbReference type="EC" id="3.4.24.16" evidence="1"/>
<dbReference type="EMBL" id="BC133350">
    <property type="protein sequence ID" value="AAI33351.1"/>
    <property type="molecule type" value="mRNA"/>
</dbReference>
<dbReference type="RefSeq" id="NP_001029161.2">
    <property type="nucleotide sequence ID" value="NM_001033989.2"/>
</dbReference>
<dbReference type="SMR" id="A2VDQ5"/>
<dbReference type="FunCoup" id="A2VDQ5">
    <property type="interactions" value="1061"/>
</dbReference>
<dbReference type="STRING" id="9913.ENSBTAP00000022482"/>
<dbReference type="MEROPS" id="M03.002"/>
<dbReference type="PaxDb" id="9913-ENSBTAP00000022482"/>
<dbReference type="GeneID" id="538650"/>
<dbReference type="KEGG" id="bta:538650"/>
<dbReference type="CTD" id="57486"/>
<dbReference type="eggNOG" id="KOG2089">
    <property type="taxonomic scope" value="Eukaryota"/>
</dbReference>
<dbReference type="InParanoid" id="A2VDQ5"/>
<dbReference type="OrthoDB" id="534666at2759"/>
<dbReference type="BRENDA" id="3.4.24.16">
    <property type="organism ID" value="908"/>
</dbReference>
<dbReference type="Proteomes" id="UP000009136">
    <property type="component" value="Unplaced"/>
</dbReference>
<dbReference type="GO" id="GO:0005829">
    <property type="term" value="C:cytosol"/>
    <property type="evidence" value="ECO:0007669"/>
    <property type="project" value="UniProtKB-SubCell"/>
</dbReference>
<dbReference type="GO" id="GO:0005758">
    <property type="term" value="C:mitochondrial intermembrane space"/>
    <property type="evidence" value="ECO:0000318"/>
    <property type="project" value="GO_Central"/>
</dbReference>
<dbReference type="GO" id="GO:0046872">
    <property type="term" value="F:metal ion binding"/>
    <property type="evidence" value="ECO:0007669"/>
    <property type="project" value="UniProtKB-KW"/>
</dbReference>
<dbReference type="GO" id="GO:0004222">
    <property type="term" value="F:metalloendopeptidase activity"/>
    <property type="evidence" value="ECO:0000318"/>
    <property type="project" value="GO_Central"/>
</dbReference>
<dbReference type="GO" id="GO:0006518">
    <property type="term" value="P:peptide metabolic process"/>
    <property type="evidence" value="ECO:0000318"/>
    <property type="project" value="GO_Central"/>
</dbReference>
<dbReference type="GO" id="GO:0006508">
    <property type="term" value="P:proteolysis"/>
    <property type="evidence" value="ECO:0000318"/>
    <property type="project" value="GO_Central"/>
</dbReference>
<dbReference type="CDD" id="cd06455">
    <property type="entry name" value="M3A_TOP"/>
    <property type="match status" value="1"/>
</dbReference>
<dbReference type="FunFam" id="1.20.1050.40:FF:000001">
    <property type="entry name" value="Thimet oligopeptidase 1"/>
    <property type="match status" value="1"/>
</dbReference>
<dbReference type="FunFam" id="3.40.390.10:FF:000006">
    <property type="entry name" value="Thimet oligopeptidase 1"/>
    <property type="match status" value="1"/>
</dbReference>
<dbReference type="Gene3D" id="3.40.390.10">
    <property type="entry name" value="Collagenase (Catalytic Domain)"/>
    <property type="match status" value="1"/>
</dbReference>
<dbReference type="Gene3D" id="1.20.1050.40">
    <property type="entry name" value="Endopeptidase. Chain P, domain 1"/>
    <property type="match status" value="1"/>
</dbReference>
<dbReference type="Gene3D" id="1.10.1370.10">
    <property type="entry name" value="Neurolysin, domain 3"/>
    <property type="match status" value="1"/>
</dbReference>
<dbReference type="InterPro" id="IPR024079">
    <property type="entry name" value="MetalloPept_cat_dom_sf"/>
</dbReference>
<dbReference type="InterPro" id="IPR024077">
    <property type="entry name" value="Neurolysin/TOP_dom2"/>
</dbReference>
<dbReference type="InterPro" id="IPR024080">
    <property type="entry name" value="Neurolysin/TOP_N"/>
</dbReference>
<dbReference type="InterPro" id="IPR045090">
    <property type="entry name" value="Pept_M3A_M3B"/>
</dbReference>
<dbReference type="InterPro" id="IPR001567">
    <property type="entry name" value="Pept_M3A_M3B_dom"/>
</dbReference>
<dbReference type="PANTHER" id="PTHR11804:SF44">
    <property type="entry name" value="NEUROLYSIN, MITOCHONDRIAL"/>
    <property type="match status" value="1"/>
</dbReference>
<dbReference type="PANTHER" id="PTHR11804">
    <property type="entry name" value="PROTEASE M3 THIMET OLIGOPEPTIDASE-RELATED"/>
    <property type="match status" value="1"/>
</dbReference>
<dbReference type="Pfam" id="PF01432">
    <property type="entry name" value="Peptidase_M3"/>
    <property type="match status" value="1"/>
</dbReference>
<dbReference type="SUPFAM" id="SSF55486">
    <property type="entry name" value="Metalloproteases ('zincins'), catalytic domain"/>
    <property type="match status" value="1"/>
</dbReference>
<dbReference type="PROSITE" id="PS00142">
    <property type="entry name" value="ZINC_PROTEASE"/>
    <property type="match status" value="1"/>
</dbReference>
<sequence>MIVQCLLAVRGLHRVGGSRILFRMTLGREEMSPLQAMSSYMAAGRNVLRWDLSPEQIKTRTEELISQTKQVYDAIGMRDIKEVTYENCLQALADIEVKYIVERTMLDFPQHVSSDKEVRAASTEADKRLSRFDIEMSMRQDIFLRIVHLKETCDLEKIKPEARRYLEKSVKMGKRNGLHLPEQVQNEIKAMKKRMSELCIDFNKNLNEDDTFLVFSKAELGALPDDFINSLEKTDGDKYKITLKYPHYFPVMKKCCVPETRRKMEMAFNTRCKEENTVILQQLLPLRAEVARLLGYSTHADFVLEMNTAKSTRHVTAFLDDLSQKLKPLGEAEREFILNLKKKECKERGFEYDGKINAWDLHYYMTQTEELKYSVDQETLKEYFPIEVVTEGLLNIYQELLGLSFEQVTDAHVWNKSVTLYTVKDKATGEVLGQFYLDLYPREGKYNHAACFGLQPGCLLPDGSRMMSVAALVVNFSQPLAGRPSLLRHDEVRTYFHEFGHVMHQICAQTDFARFSGTNVETDFVEVPSQMLENWVWDADSLRRLSKHYRHGSPITDDLLEKLVASRLVNTGLLTLRQIVLSKVDQSLHTNTALDAASEYAKYCTEILGVAATPGTNMPATFGHLAGGYDGQYYGYLWSEVFSMDMFYSCFKKEGIMNPEVGMKYRNLILKPGGSLDGMDMLQNFLTREPNQKAFLMSRGLPAP</sequence>
<reference key="1">
    <citation type="submission" date="2007-02" db="EMBL/GenBank/DDBJ databases">
        <authorList>
            <consortium name="NIH - Mammalian Gene Collection (MGC) project"/>
        </authorList>
    </citation>
    <scope>NUCLEOTIDE SEQUENCE [LARGE SCALE MRNA]</scope>
    <source>
        <strain>Hereford</strain>
        <tissue>Hypothalamus</tissue>
    </source>
</reference>
<organism>
    <name type="scientific">Bos taurus</name>
    <name type="common">Bovine</name>
    <dbReference type="NCBI Taxonomy" id="9913"/>
    <lineage>
        <taxon>Eukaryota</taxon>
        <taxon>Metazoa</taxon>
        <taxon>Chordata</taxon>
        <taxon>Craniata</taxon>
        <taxon>Vertebrata</taxon>
        <taxon>Euteleostomi</taxon>
        <taxon>Mammalia</taxon>
        <taxon>Eutheria</taxon>
        <taxon>Laurasiatheria</taxon>
        <taxon>Artiodactyla</taxon>
        <taxon>Ruminantia</taxon>
        <taxon>Pecora</taxon>
        <taxon>Bovidae</taxon>
        <taxon>Bovinae</taxon>
        <taxon>Bos</taxon>
    </lineage>
</organism>
<proteinExistence type="evidence at transcript level"/>
<gene>
    <name type="primary">NLN</name>
</gene>
<accession>A2VDQ5</accession>
<name>NEUL_BOVIN</name>